<reference key="1">
    <citation type="journal article" date="1997" name="Mol. Microbiol.">
        <title>The role of ribosomal RNAs in macrolide resistance.</title>
        <authorList>
            <person name="Sander P."/>
            <person name="Prammananan T."/>
            <person name="Meier A."/>
            <person name="Frischkorn K."/>
            <person name="Boettger E.C."/>
        </authorList>
    </citation>
    <scope>NUCLEOTIDE SEQUENCE [GENOMIC DNA]</scope>
    <source>
        <strain>BCG</strain>
    </source>
</reference>
<reference key="2">
    <citation type="journal article" date="2003" name="Proc. Natl. Acad. Sci. U.S.A.">
        <title>The complete genome sequence of Mycobacterium bovis.</title>
        <authorList>
            <person name="Garnier T."/>
            <person name="Eiglmeier K."/>
            <person name="Camus J.-C."/>
            <person name="Medina N."/>
            <person name="Mansoor H."/>
            <person name="Pryor M."/>
            <person name="Duthoy S."/>
            <person name="Grondin S."/>
            <person name="Lacroix C."/>
            <person name="Monsempe C."/>
            <person name="Simon S."/>
            <person name="Harris B."/>
            <person name="Atkin R."/>
            <person name="Doggett J."/>
            <person name="Mayes R."/>
            <person name="Keating L."/>
            <person name="Wheeler P.R."/>
            <person name="Parkhill J."/>
            <person name="Barrell B.G."/>
            <person name="Cole S.T."/>
            <person name="Gordon S.V."/>
            <person name="Hewinson R.G."/>
        </authorList>
    </citation>
    <scope>NUCLEOTIDE SEQUENCE [LARGE SCALE GENOMIC DNA]</scope>
    <source>
        <strain>ATCC BAA-935 / AF2122/97</strain>
    </source>
</reference>
<reference key="3">
    <citation type="journal article" date="2017" name="Genome Announc.">
        <title>Updated reference genome sequence and annotation of Mycobacterium bovis AF2122/97.</title>
        <authorList>
            <person name="Malone K.M."/>
            <person name="Farrell D."/>
            <person name="Stuber T.P."/>
            <person name="Schubert O.T."/>
            <person name="Aebersold R."/>
            <person name="Robbe-Austerman S."/>
            <person name="Gordon S.V."/>
        </authorList>
    </citation>
    <scope>NUCLEOTIDE SEQUENCE [LARGE SCALE GENOMIC DNA]</scope>
    <scope>GENOME REANNOTATION</scope>
    <source>
        <strain>ATCC BAA-935 / AF2122/97</strain>
    </source>
</reference>
<name>RL23_MYCBO</name>
<protein>
    <recommendedName>
        <fullName evidence="1">Large ribosomal subunit protein uL23</fullName>
    </recommendedName>
    <alternativeName>
        <fullName evidence="2">50S ribosomal protein L23</fullName>
    </alternativeName>
</protein>
<proteinExistence type="inferred from homology"/>
<accession>O06046</accession>
<accession>A0A1R3XYA2</accession>
<accession>X2BFQ3</accession>
<dbReference type="EMBL" id="Y13228">
    <property type="protein sequence ID" value="CAA73674.1"/>
    <property type="molecule type" value="Genomic_DNA"/>
</dbReference>
<dbReference type="EMBL" id="LT708304">
    <property type="protein sequence ID" value="SIT99322.1"/>
    <property type="molecule type" value="Genomic_DNA"/>
</dbReference>
<dbReference type="RefSeq" id="NP_854381.1">
    <property type="nucleotide sequence ID" value="NC_002945.3"/>
</dbReference>
<dbReference type="RefSeq" id="WP_003403581.1">
    <property type="nucleotide sequence ID" value="NC_002945.4"/>
</dbReference>
<dbReference type="SMR" id="O06046"/>
<dbReference type="KEGG" id="mbo:BQ2027_MB0723"/>
<dbReference type="PATRIC" id="fig|233413.5.peg.789"/>
<dbReference type="Proteomes" id="UP000001419">
    <property type="component" value="Chromosome"/>
</dbReference>
<dbReference type="GO" id="GO:1990904">
    <property type="term" value="C:ribonucleoprotein complex"/>
    <property type="evidence" value="ECO:0007669"/>
    <property type="project" value="UniProtKB-KW"/>
</dbReference>
<dbReference type="GO" id="GO:0005840">
    <property type="term" value="C:ribosome"/>
    <property type="evidence" value="ECO:0007669"/>
    <property type="project" value="UniProtKB-KW"/>
</dbReference>
<dbReference type="GO" id="GO:0019843">
    <property type="term" value="F:rRNA binding"/>
    <property type="evidence" value="ECO:0007669"/>
    <property type="project" value="UniProtKB-UniRule"/>
</dbReference>
<dbReference type="GO" id="GO:0003735">
    <property type="term" value="F:structural constituent of ribosome"/>
    <property type="evidence" value="ECO:0007669"/>
    <property type="project" value="InterPro"/>
</dbReference>
<dbReference type="GO" id="GO:0006412">
    <property type="term" value="P:translation"/>
    <property type="evidence" value="ECO:0007669"/>
    <property type="project" value="UniProtKB-UniRule"/>
</dbReference>
<dbReference type="FunFam" id="3.30.70.330:FF:000001">
    <property type="entry name" value="50S ribosomal protein L23"/>
    <property type="match status" value="1"/>
</dbReference>
<dbReference type="Gene3D" id="3.30.70.330">
    <property type="match status" value="1"/>
</dbReference>
<dbReference type="HAMAP" id="MF_01369_B">
    <property type="entry name" value="Ribosomal_uL23_B"/>
    <property type="match status" value="1"/>
</dbReference>
<dbReference type="InterPro" id="IPR012677">
    <property type="entry name" value="Nucleotide-bd_a/b_plait_sf"/>
</dbReference>
<dbReference type="InterPro" id="IPR013025">
    <property type="entry name" value="Ribosomal_uL23-like"/>
</dbReference>
<dbReference type="InterPro" id="IPR012678">
    <property type="entry name" value="Ribosomal_uL23/eL15/eS24_sf"/>
</dbReference>
<dbReference type="InterPro" id="IPR001014">
    <property type="entry name" value="Ribosomal_uL23_CS"/>
</dbReference>
<dbReference type="NCBIfam" id="NF004363">
    <property type="entry name" value="PRK05738.2-4"/>
    <property type="match status" value="1"/>
</dbReference>
<dbReference type="NCBIfam" id="NF004364">
    <property type="entry name" value="PRK05738.2-5"/>
    <property type="match status" value="1"/>
</dbReference>
<dbReference type="PANTHER" id="PTHR11620">
    <property type="entry name" value="60S RIBOSOMAL PROTEIN L23A"/>
    <property type="match status" value="1"/>
</dbReference>
<dbReference type="Pfam" id="PF00276">
    <property type="entry name" value="Ribosomal_L23"/>
    <property type="match status" value="1"/>
</dbReference>
<dbReference type="SUPFAM" id="SSF54189">
    <property type="entry name" value="Ribosomal proteins S24e, L23 and L15e"/>
    <property type="match status" value="1"/>
</dbReference>
<dbReference type="PROSITE" id="PS00050">
    <property type="entry name" value="RIBOSOMAL_L23"/>
    <property type="match status" value="1"/>
</dbReference>
<comment type="function">
    <text evidence="1">One of the early assembly proteins it binds 23S rRNA. One of the proteins that surrounds the polypeptide exit tunnel on the outside of the ribosome. Forms the main docking site for trigger factor binding to the ribosome.</text>
</comment>
<comment type="subunit">
    <text evidence="1">Part of the 50S ribosomal subunit. Contacts protein L29, and trigger factor when it is bound to the ribosome.</text>
</comment>
<comment type="similarity">
    <text evidence="1">Belongs to the universal ribosomal protein uL23 family.</text>
</comment>
<gene>
    <name evidence="1" type="primary">rplW</name>
    <name type="ordered locus">BQ2027_MB0723</name>
</gene>
<keyword id="KW-1185">Reference proteome</keyword>
<keyword id="KW-0687">Ribonucleoprotein</keyword>
<keyword id="KW-0689">Ribosomal protein</keyword>
<keyword id="KW-0694">RNA-binding</keyword>
<keyword id="KW-0699">rRNA-binding</keyword>
<organism>
    <name type="scientific">Mycobacterium bovis (strain ATCC BAA-935 / AF2122/97)</name>
    <dbReference type="NCBI Taxonomy" id="233413"/>
    <lineage>
        <taxon>Bacteria</taxon>
        <taxon>Bacillati</taxon>
        <taxon>Actinomycetota</taxon>
        <taxon>Actinomycetes</taxon>
        <taxon>Mycobacteriales</taxon>
        <taxon>Mycobacteriaceae</taxon>
        <taxon>Mycobacterium</taxon>
        <taxon>Mycobacterium tuberculosis complex</taxon>
    </lineage>
</organism>
<sequence length="100" mass="10958">MATLADPRDIILAPVISEKSYGLLDDNVYTFLVRPDSNKTQIKIAVEKIFAVKVASVNTANRQGKRKRTRTGYGKRKSTKRAIVTLAPGSRPIDLFGAPA</sequence>
<evidence type="ECO:0000255" key="1">
    <source>
        <dbReference type="HAMAP-Rule" id="MF_01369"/>
    </source>
</evidence>
<evidence type="ECO:0000305" key="2"/>
<feature type="chain" id="PRO_0000129415" description="Large ribosomal subunit protein uL23">
    <location>
        <begin position="1"/>
        <end position="100"/>
    </location>
</feature>
<feature type="sequence conflict" description="In Ref. 1; CAA73674." evidence="2" ref="1">
    <original>A</original>
    <variation>G</variation>
    <location>
        <position position="51"/>
    </location>
</feature>